<evidence type="ECO:0000250" key="1">
    <source>
        <dbReference type="UniProtKB" id="Q9UH62"/>
    </source>
</evidence>
<evidence type="ECO:0000255" key="2"/>
<evidence type="ECO:0000256" key="3">
    <source>
        <dbReference type="SAM" id="MobiDB-lite"/>
    </source>
</evidence>
<evidence type="ECO:0000269" key="4">
    <source>
    </source>
</evidence>
<evidence type="ECO:0000269" key="5">
    <source>
    </source>
</evidence>
<evidence type="ECO:0000269" key="6">
    <source>
    </source>
</evidence>
<evidence type="ECO:0000305" key="7"/>
<evidence type="ECO:0000305" key="8">
    <source>
    </source>
</evidence>
<evidence type="ECO:0000305" key="9">
    <source>
    </source>
</evidence>
<evidence type="ECO:0000305" key="10">
    <source>
    </source>
</evidence>
<evidence type="ECO:0007744" key="11">
    <source>
    </source>
</evidence>
<evidence type="ECO:0007744" key="12">
    <source>
    </source>
</evidence>
<proteinExistence type="evidence at protein level"/>
<protein>
    <recommendedName>
        <fullName>Armadillo repeat-containing X-linked protein 3</fullName>
    </recommendedName>
</protein>
<accession>Q8BHS6</accession>
<accession>A2AKS4</accession>
<accession>Q91VP8</accession>
<accession>Q9DC32</accession>
<keyword id="KW-0963">Cytoplasm</keyword>
<keyword id="KW-0472">Membrane</keyword>
<keyword id="KW-0496">Mitochondrion</keyword>
<keyword id="KW-1000">Mitochondrion outer membrane</keyword>
<keyword id="KW-0539">Nucleus</keyword>
<keyword id="KW-0597">Phosphoprotein</keyword>
<keyword id="KW-1185">Reference proteome</keyword>
<keyword id="KW-0677">Repeat</keyword>
<keyword id="KW-0735">Signal-anchor</keyword>
<keyword id="KW-0812">Transmembrane</keyword>
<keyword id="KW-1133">Transmembrane helix</keyword>
<name>ARMX3_MOUSE</name>
<organism>
    <name type="scientific">Mus musculus</name>
    <name type="common">Mouse</name>
    <dbReference type="NCBI Taxonomy" id="10090"/>
    <lineage>
        <taxon>Eukaryota</taxon>
        <taxon>Metazoa</taxon>
        <taxon>Chordata</taxon>
        <taxon>Craniata</taxon>
        <taxon>Vertebrata</taxon>
        <taxon>Euteleostomi</taxon>
        <taxon>Mammalia</taxon>
        <taxon>Eutheria</taxon>
        <taxon>Euarchontoglires</taxon>
        <taxon>Glires</taxon>
        <taxon>Rodentia</taxon>
        <taxon>Myomorpha</taxon>
        <taxon>Muroidea</taxon>
        <taxon>Muridae</taxon>
        <taxon>Murinae</taxon>
        <taxon>Mus</taxon>
        <taxon>Mus</taxon>
    </lineage>
</organism>
<sequence length="379" mass="42620">MGYARKVGWVTAGLVIGAGACYCIYRLTRGRKQNKEKMAEGGSGDVDDAGDCSGARYNDWSDDDDDSNESKSIVWYPPWARIGTEAGTRARARARARATRARRAVQKRASPNSDDTVLSPQELQKVLCLVEMSEKPYILEAALIALGNNAAYAFNRDIIRDLGGLPIVAKILNTRDPIVKEKALIVLNNLSVNAENQRRLKVYMNQVCDDTVTSRLNSSVQLAGLRLLTNMTVTNEYQHILANSISDFFRLFSAGNEETKLQVLKLLLNLAENPAMTRELLRAQVPSSLGSLFNKKEYKEVILKLLIIFENINDNFKWEENEPAQNHFSEGSLFFFLKEFQVCADKVLGIESRHDFQVRVKVGKFVAKLTERMFPKSQE</sequence>
<gene>
    <name type="primary">Armcx3</name>
    <name type="synonym">Alex3</name>
</gene>
<feature type="chain" id="PRO_0000191368" description="Armadillo repeat-containing X-linked protein 3">
    <location>
        <begin position="1"/>
        <end position="379"/>
    </location>
</feature>
<feature type="topological domain" description="Mitochondrial intermembrane" evidence="8">
    <location>
        <begin position="1"/>
        <end position="6"/>
    </location>
</feature>
<feature type="transmembrane region" description="Helical; Signal-anchor" evidence="2">
    <location>
        <begin position="7"/>
        <end position="29"/>
    </location>
</feature>
<feature type="topological domain" description="Cytoplasmic" evidence="4">
    <location>
        <begin position="30"/>
        <end position="379"/>
    </location>
</feature>
<feature type="repeat" description="ARM 1" evidence="2">
    <location>
        <begin position="111"/>
        <end position="151"/>
    </location>
</feature>
<feature type="repeat" description="ARM 2" evidence="2">
    <location>
        <begin position="153"/>
        <end position="192"/>
    </location>
</feature>
<feature type="repeat" description="ARM 3" evidence="2">
    <location>
        <begin position="233"/>
        <end position="272"/>
    </location>
</feature>
<feature type="region of interest" description="Mitochondrion outer membrane (MOM)-targeting sequence" evidence="9">
    <location>
        <begin position="1"/>
        <end position="6"/>
    </location>
</feature>
<feature type="region of interest" description="Mitochondrion outer membrane (MOM)-targeting sequence" evidence="9">
    <location>
        <begin position="26"/>
        <end position="37"/>
    </location>
</feature>
<feature type="region of interest" description="Nuclear localization signal" evidence="10">
    <location>
        <begin position="89"/>
        <end position="98"/>
    </location>
</feature>
<feature type="region of interest" description="Disordered" evidence="3">
    <location>
        <begin position="95"/>
        <end position="116"/>
    </location>
</feature>
<feature type="compositionally biased region" description="Basic residues" evidence="3">
    <location>
        <begin position="95"/>
        <end position="106"/>
    </location>
</feature>
<feature type="modified residue" description="Phosphoserine" evidence="11 12">
    <location>
        <position position="61"/>
    </location>
</feature>
<feature type="modified residue" description="Phosphoserine" evidence="12">
    <location>
        <position position="67"/>
    </location>
</feature>
<feature type="modified residue" description="Phosphoserine" evidence="1">
    <location>
        <position position="72"/>
    </location>
</feature>
<feature type="modified residue" description="Phosphoserine" evidence="12">
    <location>
        <position position="110"/>
    </location>
</feature>
<feature type="sequence conflict" description="In Ref. 3; AAH11101." evidence="7" ref="3">
    <original>A</original>
    <variation>T</variation>
    <location>
        <position position="4"/>
    </location>
</feature>
<feature type="sequence conflict" description="In Ref. 1; BAB23399." evidence="7" ref="1">
    <original>S</original>
    <variation>P</variation>
    <location>
        <position position="53"/>
    </location>
</feature>
<feature type="sequence conflict" description="In Ref. 1; BAB23399." evidence="7" ref="1">
    <original>N</original>
    <variation>Y</variation>
    <location>
        <position position="68"/>
    </location>
</feature>
<feature type="sequence conflict" description="In Ref. 1; BAB23399." evidence="7" ref="1">
    <original>L</original>
    <variation>P</variation>
    <location>
        <position position="333"/>
    </location>
</feature>
<reference key="1">
    <citation type="journal article" date="2005" name="Science">
        <title>The transcriptional landscape of the mammalian genome.</title>
        <authorList>
            <person name="Carninci P."/>
            <person name="Kasukawa T."/>
            <person name="Katayama S."/>
            <person name="Gough J."/>
            <person name="Frith M.C."/>
            <person name="Maeda N."/>
            <person name="Oyama R."/>
            <person name="Ravasi T."/>
            <person name="Lenhard B."/>
            <person name="Wells C."/>
            <person name="Kodzius R."/>
            <person name="Shimokawa K."/>
            <person name="Bajic V.B."/>
            <person name="Brenner S.E."/>
            <person name="Batalov S."/>
            <person name="Forrest A.R."/>
            <person name="Zavolan M."/>
            <person name="Davis M.J."/>
            <person name="Wilming L.G."/>
            <person name="Aidinis V."/>
            <person name="Allen J.E."/>
            <person name="Ambesi-Impiombato A."/>
            <person name="Apweiler R."/>
            <person name="Aturaliya R.N."/>
            <person name="Bailey T.L."/>
            <person name="Bansal M."/>
            <person name="Baxter L."/>
            <person name="Beisel K.W."/>
            <person name="Bersano T."/>
            <person name="Bono H."/>
            <person name="Chalk A.M."/>
            <person name="Chiu K.P."/>
            <person name="Choudhary V."/>
            <person name="Christoffels A."/>
            <person name="Clutterbuck D.R."/>
            <person name="Crowe M.L."/>
            <person name="Dalla E."/>
            <person name="Dalrymple B.P."/>
            <person name="de Bono B."/>
            <person name="Della Gatta G."/>
            <person name="di Bernardo D."/>
            <person name="Down T."/>
            <person name="Engstrom P."/>
            <person name="Fagiolini M."/>
            <person name="Faulkner G."/>
            <person name="Fletcher C.F."/>
            <person name="Fukushima T."/>
            <person name="Furuno M."/>
            <person name="Futaki S."/>
            <person name="Gariboldi M."/>
            <person name="Georgii-Hemming P."/>
            <person name="Gingeras T.R."/>
            <person name="Gojobori T."/>
            <person name="Green R.E."/>
            <person name="Gustincich S."/>
            <person name="Harbers M."/>
            <person name="Hayashi Y."/>
            <person name="Hensch T.K."/>
            <person name="Hirokawa N."/>
            <person name="Hill D."/>
            <person name="Huminiecki L."/>
            <person name="Iacono M."/>
            <person name="Ikeo K."/>
            <person name="Iwama A."/>
            <person name="Ishikawa T."/>
            <person name="Jakt M."/>
            <person name="Kanapin A."/>
            <person name="Katoh M."/>
            <person name="Kawasawa Y."/>
            <person name="Kelso J."/>
            <person name="Kitamura H."/>
            <person name="Kitano H."/>
            <person name="Kollias G."/>
            <person name="Krishnan S.P."/>
            <person name="Kruger A."/>
            <person name="Kummerfeld S.K."/>
            <person name="Kurochkin I.V."/>
            <person name="Lareau L.F."/>
            <person name="Lazarevic D."/>
            <person name="Lipovich L."/>
            <person name="Liu J."/>
            <person name="Liuni S."/>
            <person name="McWilliam S."/>
            <person name="Madan Babu M."/>
            <person name="Madera M."/>
            <person name="Marchionni L."/>
            <person name="Matsuda H."/>
            <person name="Matsuzawa S."/>
            <person name="Miki H."/>
            <person name="Mignone F."/>
            <person name="Miyake S."/>
            <person name="Morris K."/>
            <person name="Mottagui-Tabar S."/>
            <person name="Mulder N."/>
            <person name="Nakano N."/>
            <person name="Nakauchi H."/>
            <person name="Ng P."/>
            <person name="Nilsson R."/>
            <person name="Nishiguchi S."/>
            <person name="Nishikawa S."/>
            <person name="Nori F."/>
            <person name="Ohara O."/>
            <person name="Okazaki Y."/>
            <person name="Orlando V."/>
            <person name="Pang K.C."/>
            <person name="Pavan W.J."/>
            <person name="Pavesi G."/>
            <person name="Pesole G."/>
            <person name="Petrovsky N."/>
            <person name="Piazza S."/>
            <person name="Reed J."/>
            <person name="Reid J.F."/>
            <person name="Ring B.Z."/>
            <person name="Ringwald M."/>
            <person name="Rost B."/>
            <person name="Ruan Y."/>
            <person name="Salzberg S.L."/>
            <person name="Sandelin A."/>
            <person name="Schneider C."/>
            <person name="Schoenbach C."/>
            <person name="Sekiguchi K."/>
            <person name="Semple C.A."/>
            <person name="Seno S."/>
            <person name="Sessa L."/>
            <person name="Sheng Y."/>
            <person name="Shibata Y."/>
            <person name="Shimada H."/>
            <person name="Shimada K."/>
            <person name="Silva D."/>
            <person name="Sinclair B."/>
            <person name="Sperling S."/>
            <person name="Stupka E."/>
            <person name="Sugiura K."/>
            <person name="Sultana R."/>
            <person name="Takenaka Y."/>
            <person name="Taki K."/>
            <person name="Tammoja K."/>
            <person name="Tan S.L."/>
            <person name="Tang S."/>
            <person name="Taylor M.S."/>
            <person name="Tegner J."/>
            <person name="Teichmann S.A."/>
            <person name="Ueda H.R."/>
            <person name="van Nimwegen E."/>
            <person name="Verardo R."/>
            <person name="Wei C.L."/>
            <person name="Yagi K."/>
            <person name="Yamanishi H."/>
            <person name="Zabarovsky E."/>
            <person name="Zhu S."/>
            <person name="Zimmer A."/>
            <person name="Hide W."/>
            <person name="Bult C."/>
            <person name="Grimmond S.M."/>
            <person name="Teasdale R.D."/>
            <person name="Liu E.T."/>
            <person name="Brusic V."/>
            <person name="Quackenbush J."/>
            <person name="Wahlestedt C."/>
            <person name="Mattick J.S."/>
            <person name="Hume D.A."/>
            <person name="Kai C."/>
            <person name="Sasaki D."/>
            <person name="Tomaru Y."/>
            <person name="Fukuda S."/>
            <person name="Kanamori-Katayama M."/>
            <person name="Suzuki M."/>
            <person name="Aoki J."/>
            <person name="Arakawa T."/>
            <person name="Iida J."/>
            <person name="Imamura K."/>
            <person name="Itoh M."/>
            <person name="Kato T."/>
            <person name="Kawaji H."/>
            <person name="Kawagashira N."/>
            <person name="Kawashima T."/>
            <person name="Kojima M."/>
            <person name="Kondo S."/>
            <person name="Konno H."/>
            <person name="Nakano K."/>
            <person name="Ninomiya N."/>
            <person name="Nishio T."/>
            <person name="Okada M."/>
            <person name="Plessy C."/>
            <person name="Shibata K."/>
            <person name="Shiraki T."/>
            <person name="Suzuki S."/>
            <person name="Tagami M."/>
            <person name="Waki K."/>
            <person name="Watahiki A."/>
            <person name="Okamura-Oho Y."/>
            <person name="Suzuki H."/>
            <person name="Kawai J."/>
            <person name="Hayashizaki Y."/>
        </authorList>
    </citation>
    <scope>NUCLEOTIDE SEQUENCE [LARGE SCALE MRNA]</scope>
    <source>
        <strain>C57BL/6J</strain>
    </source>
</reference>
<reference key="2">
    <citation type="journal article" date="2009" name="PLoS Biol.">
        <title>Lineage-specific biology revealed by a finished genome assembly of the mouse.</title>
        <authorList>
            <person name="Church D.M."/>
            <person name="Goodstadt L."/>
            <person name="Hillier L.W."/>
            <person name="Zody M.C."/>
            <person name="Goldstein S."/>
            <person name="She X."/>
            <person name="Bult C.J."/>
            <person name="Agarwala R."/>
            <person name="Cherry J.L."/>
            <person name="DiCuccio M."/>
            <person name="Hlavina W."/>
            <person name="Kapustin Y."/>
            <person name="Meric P."/>
            <person name="Maglott D."/>
            <person name="Birtle Z."/>
            <person name="Marques A.C."/>
            <person name="Graves T."/>
            <person name="Zhou S."/>
            <person name="Teague B."/>
            <person name="Potamousis K."/>
            <person name="Churas C."/>
            <person name="Place M."/>
            <person name="Herschleb J."/>
            <person name="Runnheim R."/>
            <person name="Forrest D."/>
            <person name="Amos-Landgraf J."/>
            <person name="Schwartz D.C."/>
            <person name="Cheng Z."/>
            <person name="Lindblad-Toh K."/>
            <person name="Eichler E.E."/>
            <person name="Ponting C.P."/>
        </authorList>
    </citation>
    <scope>NUCLEOTIDE SEQUENCE [LARGE SCALE GENOMIC DNA]</scope>
    <source>
        <strain>C57BL/6J</strain>
    </source>
</reference>
<reference key="3">
    <citation type="journal article" date="2004" name="Genome Res.">
        <title>The status, quality, and expansion of the NIH full-length cDNA project: the Mammalian Gene Collection (MGC).</title>
        <authorList>
            <consortium name="The MGC Project Team"/>
        </authorList>
    </citation>
    <scope>NUCLEOTIDE SEQUENCE [LARGE SCALE MRNA]</scope>
    <source>
        <strain>FVB/N</strain>
        <tissue>Mammary tumor</tissue>
    </source>
</reference>
<reference key="4">
    <citation type="journal article" date="2007" name="Proc. Natl. Acad. Sci. U.S.A.">
        <title>Large-scale phosphorylation analysis of mouse liver.</title>
        <authorList>
            <person name="Villen J."/>
            <person name="Beausoleil S.A."/>
            <person name="Gerber S.A."/>
            <person name="Gygi S.P."/>
        </authorList>
    </citation>
    <scope>PHOSPHORYLATION [LARGE SCALE ANALYSIS] AT SER-61</scope>
    <scope>IDENTIFICATION BY MASS SPECTROMETRY [LARGE SCALE ANALYSIS]</scope>
    <source>
        <tissue>Liver</tissue>
    </source>
</reference>
<reference key="5">
    <citation type="journal article" date="2009" name="J. Biol. Chem.">
        <title>The armadillo repeat-containing protein, ARMCX3, physically and functionally interacts with the developmental regulatory factor Sox10.</title>
        <authorList>
            <person name="Mou Z."/>
            <person name="Tapper A.R."/>
            <person name="Gardner P.D."/>
        </authorList>
    </citation>
    <scope>FUNCTION</scope>
    <scope>SUBCELLULAR LOCATION</scope>
    <scope>INTERACTION WITH SOX10</scope>
</reference>
<reference key="6">
    <citation type="journal article" date="2010" name="Cell">
        <title>A tissue-specific atlas of mouse protein phosphorylation and expression.</title>
        <authorList>
            <person name="Huttlin E.L."/>
            <person name="Jedrychowski M.P."/>
            <person name="Elias J.E."/>
            <person name="Goswami T."/>
            <person name="Rad R."/>
            <person name="Beausoleil S.A."/>
            <person name="Villen J."/>
            <person name="Haas W."/>
            <person name="Sowa M.E."/>
            <person name="Gygi S.P."/>
        </authorList>
    </citation>
    <scope>PHOSPHORYLATION [LARGE SCALE ANALYSIS] AT SER-61; SER-67 AND SER-110</scope>
    <scope>IDENTIFICATION BY MASS SPECTROMETRY [LARGE SCALE ANALYSIS]</scope>
    <source>
        <tissue>Brain</tissue>
        <tissue>Brown adipose tissue</tissue>
        <tissue>Kidney</tissue>
        <tissue>Liver</tissue>
        <tissue>Lung</tissue>
        <tissue>Pancreas</tissue>
        <tissue>Testis</tissue>
    </source>
</reference>
<reference key="7">
    <citation type="journal article" date="2012" name="Nat. Commun.">
        <title>The eutherian Armcx genes regulate mitochondrial trafficking in neurons and interact with Miro and Trak2.</title>
        <authorList>
            <person name="Lopez-Domenech G."/>
            <person name="Serrat R."/>
            <person name="Mirra S."/>
            <person name="D'Aniello S."/>
            <person name="Somorjai I."/>
            <person name="Abad A."/>
            <person name="Vitureira N."/>
            <person name="Garcia-Arumi E."/>
            <person name="Alonso M.T."/>
            <person name="Rodriguez-Prados M."/>
            <person name="Burgaya F."/>
            <person name="Andreu A.L."/>
            <person name="Garcia-Sancho J."/>
            <person name="Trullas R."/>
            <person name="Garcia-Fernandez J."/>
            <person name="Soriano E."/>
        </authorList>
    </citation>
    <scope>FUNCTION</scope>
    <scope>SUBCELLULAR LOCATION</scope>
    <scope>TISSUE SPECIFICITY</scope>
    <scope>INTERACTION WITH MIRO1; MIRO2 AND TRAK2</scope>
</reference>
<reference key="8">
    <citation type="journal article" date="2013" name="PLoS ONE">
        <title>The non-canonical Wnt/PKC pathway regulates mitochondrial dynamics through degradation of the arm-like domain-containing protein Alex3.</title>
        <authorList>
            <person name="Serrat R."/>
            <person name="Lopez-Domenech G."/>
            <person name="Mirra S."/>
            <person name="Quevedo M."/>
            <person name="Garcia-Fernandez J."/>
            <person name="Ulloa F."/>
            <person name="Burgaya F."/>
            <person name="Soriano E."/>
        </authorList>
    </citation>
    <scope>FUNCTION</scope>
</reference>
<dbReference type="EMBL" id="AK004598">
    <property type="protein sequence ID" value="BAB23399.1"/>
    <property type="molecule type" value="mRNA"/>
</dbReference>
<dbReference type="EMBL" id="AK030729">
    <property type="protein sequence ID" value="BAC27102.1"/>
    <property type="molecule type" value="mRNA"/>
</dbReference>
<dbReference type="EMBL" id="AL772348">
    <property type="status" value="NOT_ANNOTATED_CDS"/>
    <property type="molecule type" value="Genomic_DNA"/>
</dbReference>
<dbReference type="EMBL" id="BC011101">
    <property type="protein sequence ID" value="AAH11101.1"/>
    <property type="molecule type" value="mRNA"/>
</dbReference>
<dbReference type="EMBL" id="BC051113">
    <property type="protein sequence ID" value="AAH51113.1"/>
    <property type="molecule type" value="mRNA"/>
</dbReference>
<dbReference type="CCDS" id="CCDS30400.1"/>
<dbReference type="RefSeq" id="NP_001345449.1">
    <property type="nucleotide sequence ID" value="NM_001358520.1"/>
</dbReference>
<dbReference type="RefSeq" id="NP_001345450.1">
    <property type="nucleotide sequence ID" value="NM_001358521.1"/>
</dbReference>
<dbReference type="RefSeq" id="NP_082146.2">
    <property type="nucleotide sequence ID" value="NM_027870.4"/>
</dbReference>
<dbReference type="RefSeq" id="XP_006528672.1">
    <property type="nucleotide sequence ID" value="XM_006528609.2"/>
</dbReference>
<dbReference type="RefSeq" id="XP_017174115.1">
    <property type="nucleotide sequence ID" value="XM_017318626.2"/>
</dbReference>
<dbReference type="SMR" id="Q8BHS6"/>
<dbReference type="BioGRID" id="214867">
    <property type="interactions" value="5"/>
</dbReference>
<dbReference type="FunCoup" id="Q8BHS6">
    <property type="interactions" value="1523"/>
</dbReference>
<dbReference type="STRING" id="10090.ENSMUSP00000084097"/>
<dbReference type="GlyGen" id="Q8BHS6">
    <property type="glycosylation" value="2 sites, 2 N-linked glycans (2 sites)"/>
</dbReference>
<dbReference type="iPTMnet" id="Q8BHS6"/>
<dbReference type="PhosphoSitePlus" id="Q8BHS6"/>
<dbReference type="jPOST" id="Q8BHS6"/>
<dbReference type="PaxDb" id="10090-ENSMUSP00000080518"/>
<dbReference type="PeptideAtlas" id="Q8BHS6"/>
<dbReference type="ProteomicsDB" id="277306"/>
<dbReference type="Pumba" id="Q8BHS6"/>
<dbReference type="Antibodypedia" id="378">
    <property type="antibodies" value="242 antibodies from 29 providers"/>
</dbReference>
<dbReference type="DNASU" id="71703"/>
<dbReference type="Ensembl" id="ENSMUST00000081834.10">
    <property type="protein sequence ID" value="ENSMUSP00000080518.4"/>
    <property type="gene ID" value="ENSMUSG00000049047.12"/>
</dbReference>
<dbReference type="Ensembl" id="ENSMUST00000086880.11">
    <property type="protein sequence ID" value="ENSMUSP00000084093.5"/>
    <property type="gene ID" value="ENSMUSG00000049047.12"/>
</dbReference>
<dbReference type="Ensembl" id="ENSMUST00000086884.5">
    <property type="protein sequence ID" value="ENSMUSP00000084097.5"/>
    <property type="gene ID" value="ENSMUSG00000049047.12"/>
</dbReference>
<dbReference type="GeneID" id="71703"/>
<dbReference type="KEGG" id="mmu:71703"/>
<dbReference type="UCSC" id="uc009ugo.2">
    <property type="organism name" value="mouse"/>
</dbReference>
<dbReference type="AGR" id="MGI:1918953"/>
<dbReference type="CTD" id="51566"/>
<dbReference type="MGI" id="MGI:1918953">
    <property type="gene designation" value="Armcx3"/>
</dbReference>
<dbReference type="VEuPathDB" id="HostDB:ENSMUSG00000049047"/>
<dbReference type="eggNOG" id="ENOG502TCDI">
    <property type="taxonomic scope" value="Eukaryota"/>
</dbReference>
<dbReference type="GeneTree" id="ENSGT00940000162753"/>
<dbReference type="HOGENOM" id="CLU_037187_0_0_1"/>
<dbReference type="InParanoid" id="Q8BHS6"/>
<dbReference type="OMA" id="DSKSIVW"/>
<dbReference type="OrthoDB" id="10017790at2759"/>
<dbReference type="PhylomeDB" id="Q8BHS6"/>
<dbReference type="TreeFam" id="TF335652"/>
<dbReference type="Reactome" id="R-MMU-9013404">
    <property type="pathway name" value="RAC2 GTPase cycle"/>
</dbReference>
<dbReference type="BioGRID-ORCS" id="71703">
    <property type="hits" value="2 hits in 79 CRISPR screens"/>
</dbReference>
<dbReference type="ChiTaRS" id="Armcx3">
    <property type="organism name" value="mouse"/>
</dbReference>
<dbReference type="PRO" id="PR:Q8BHS6"/>
<dbReference type="Proteomes" id="UP000000589">
    <property type="component" value="Chromosome X"/>
</dbReference>
<dbReference type="RNAct" id="Q8BHS6">
    <property type="molecule type" value="protein"/>
</dbReference>
<dbReference type="Bgee" id="ENSMUSG00000049047">
    <property type="expression patterns" value="Expressed in dentate gyrus of hippocampal formation granule cell and 70 other cell types or tissues"/>
</dbReference>
<dbReference type="GO" id="GO:1904115">
    <property type="term" value="C:axon cytoplasm"/>
    <property type="evidence" value="ECO:0007669"/>
    <property type="project" value="GOC"/>
</dbReference>
<dbReference type="GO" id="GO:0005829">
    <property type="term" value="C:cytosol"/>
    <property type="evidence" value="ECO:0000314"/>
    <property type="project" value="MGI"/>
</dbReference>
<dbReference type="GO" id="GO:0005741">
    <property type="term" value="C:mitochondrial outer membrane"/>
    <property type="evidence" value="ECO:0000314"/>
    <property type="project" value="MGI"/>
</dbReference>
<dbReference type="GO" id="GO:0005739">
    <property type="term" value="C:mitochondrion"/>
    <property type="evidence" value="ECO:0000314"/>
    <property type="project" value="MGI"/>
</dbReference>
<dbReference type="GO" id="GO:0005634">
    <property type="term" value="C:nucleus"/>
    <property type="evidence" value="ECO:0000314"/>
    <property type="project" value="MGI"/>
</dbReference>
<dbReference type="GO" id="GO:0019896">
    <property type="term" value="P:axonal transport of mitochondrion"/>
    <property type="evidence" value="ECO:0000314"/>
    <property type="project" value="MGI"/>
</dbReference>
<dbReference type="GO" id="GO:0007005">
    <property type="term" value="P:mitochondrion organization"/>
    <property type="evidence" value="ECO:0000314"/>
    <property type="project" value="MGI"/>
</dbReference>
<dbReference type="GO" id="GO:0045944">
    <property type="term" value="P:positive regulation of transcription by RNA polymerase II"/>
    <property type="evidence" value="ECO:0000316"/>
    <property type="project" value="MGI"/>
</dbReference>
<dbReference type="GO" id="GO:0008104">
    <property type="term" value="P:protein localization"/>
    <property type="evidence" value="ECO:0000314"/>
    <property type="project" value="MGI"/>
</dbReference>
<dbReference type="FunFam" id="1.25.10.10:FF:000846">
    <property type="entry name" value="Armadillo repeat-containing X-linked protein 3"/>
    <property type="match status" value="1"/>
</dbReference>
<dbReference type="Gene3D" id="1.25.10.10">
    <property type="entry name" value="Leucine-rich Repeat Variant"/>
    <property type="match status" value="2"/>
</dbReference>
<dbReference type="InterPro" id="IPR011989">
    <property type="entry name" value="ARM-like"/>
</dbReference>
<dbReference type="InterPro" id="IPR006911">
    <property type="entry name" value="ARM-rpt_dom"/>
</dbReference>
<dbReference type="InterPro" id="IPR016024">
    <property type="entry name" value="ARM-type_fold"/>
</dbReference>
<dbReference type="InterPro" id="IPR000225">
    <property type="entry name" value="Armadillo"/>
</dbReference>
<dbReference type="InterPro" id="IPR051303">
    <property type="entry name" value="Armcx_regulator"/>
</dbReference>
<dbReference type="PANTHER" id="PTHR15712">
    <property type="entry name" value="ARMADILLO REPEAT CONTAINING PROTEIN"/>
    <property type="match status" value="1"/>
</dbReference>
<dbReference type="PANTHER" id="PTHR15712:SF8">
    <property type="entry name" value="ARMADILLO REPEAT-CONTAINING X-LINKED PROTEIN 3"/>
    <property type="match status" value="1"/>
</dbReference>
<dbReference type="Pfam" id="PF04826">
    <property type="entry name" value="Arm_2"/>
    <property type="match status" value="1"/>
</dbReference>
<dbReference type="SUPFAM" id="SSF48371">
    <property type="entry name" value="ARM repeat"/>
    <property type="match status" value="1"/>
</dbReference>
<dbReference type="PROSITE" id="PS50176">
    <property type="entry name" value="ARM_REPEAT"/>
    <property type="match status" value="1"/>
</dbReference>
<comment type="function">
    <text evidence="4 5 6">Regulates mitochondrial aggregation and transport in axons in living neurons (PubMed:22569362, PubMed:23844091). May link mitochondria to the Trak2-kinesin motor complex via its interaction with Miro and Trak2 (PubMed:22569362). Mitochondrial distribution and dynamics is regulated through Armcx3 protein degradation, which is promoted by PCK and negatively regulated by Wnt1 (PubMed:23844091). Enhances the Sox10-mediated transactivation of the neuronal acetylcholine receptor subunit alpha-3 and beta-4 subunit gene promoters (PubMed:19304657).</text>
</comment>
<comment type="subunit">
    <text evidence="4 5">Interacts (via ARM domain) with MIRO1, MIRO2 and TRAK2. The interaction with Miro is calcium-dependent (PubMed:22569362). Interacts with Sox10 (PubMed:19304657).</text>
</comment>
<comment type="subcellular location">
    <subcellularLocation>
        <location evidence="4 5">Mitochondrion outer membrane</location>
        <topology evidence="2">Single-pass membrane protein</topology>
    </subcellularLocation>
    <subcellularLocation>
        <location evidence="5">Cytoplasm</location>
    </subcellularLocation>
    <subcellularLocation>
        <location evidence="5">Nucleus</location>
    </subcellularLocation>
</comment>
<comment type="tissue specificity">
    <text evidence="5">Highly expressed in the developing neural tissues, neural crest derivatives and hind limbs. Also widely expressed in the adult nervous tissue, especially in the forebrain, including the cerebral cortex, hippocampus and thalamus.</text>
</comment>
<comment type="similarity">
    <text evidence="7">Belongs to the eutherian X-chromosome-specific Armcx family.</text>
</comment>